<organism>
    <name type="scientific">Escherichia coli (strain K12 / DH10B)</name>
    <dbReference type="NCBI Taxonomy" id="316385"/>
    <lineage>
        <taxon>Bacteria</taxon>
        <taxon>Pseudomonadati</taxon>
        <taxon>Pseudomonadota</taxon>
        <taxon>Gammaproteobacteria</taxon>
        <taxon>Enterobacterales</taxon>
        <taxon>Enterobacteriaceae</taxon>
        <taxon>Escherichia</taxon>
    </lineage>
</organism>
<dbReference type="EC" id="3.1.-.-" evidence="1"/>
<dbReference type="EMBL" id="CP000948">
    <property type="protein sequence ID" value="ACB01881.1"/>
    <property type="molecule type" value="Genomic_DNA"/>
</dbReference>
<dbReference type="RefSeq" id="WP_000084469.1">
    <property type="nucleotide sequence ID" value="NC_010473.1"/>
</dbReference>
<dbReference type="SMR" id="B1X654"/>
<dbReference type="GeneID" id="93776823"/>
<dbReference type="KEGG" id="ecd:ECDH10B_0728"/>
<dbReference type="HOGENOM" id="CLU_106710_0_1_6"/>
<dbReference type="GO" id="GO:0005737">
    <property type="term" value="C:cytoplasm"/>
    <property type="evidence" value="ECO:0007669"/>
    <property type="project" value="UniProtKB-SubCell"/>
</dbReference>
<dbReference type="GO" id="GO:0004222">
    <property type="term" value="F:metalloendopeptidase activity"/>
    <property type="evidence" value="ECO:0007669"/>
    <property type="project" value="InterPro"/>
</dbReference>
<dbReference type="GO" id="GO:0004521">
    <property type="term" value="F:RNA endonuclease activity"/>
    <property type="evidence" value="ECO:0007669"/>
    <property type="project" value="UniProtKB-UniRule"/>
</dbReference>
<dbReference type="GO" id="GO:0008270">
    <property type="term" value="F:zinc ion binding"/>
    <property type="evidence" value="ECO:0007669"/>
    <property type="project" value="UniProtKB-UniRule"/>
</dbReference>
<dbReference type="GO" id="GO:0006364">
    <property type="term" value="P:rRNA processing"/>
    <property type="evidence" value="ECO:0007669"/>
    <property type="project" value="UniProtKB-UniRule"/>
</dbReference>
<dbReference type="FunFam" id="3.40.390.30:FF:000001">
    <property type="entry name" value="Endoribonuclease YbeY"/>
    <property type="match status" value="1"/>
</dbReference>
<dbReference type="Gene3D" id="3.40.390.30">
    <property type="entry name" value="Metalloproteases ('zincins'), catalytic domain"/>
    <property type="match status" value="1"/>
</dbReference>
<dbReference type="HAMAP" id="MF_00009">
    <property type="entry name" value="Endoribonucl_YbeY"/>
    <property type="match status" value="1"/>
</dbReference>
<dbReference type="InterPro" id="IPR023091">
    <property type="entry name" value="MetalPrtase_cat_dom_sf_prd"/>
</dbReference>
<dbReference type="InterPro" id="IPR002036">
    <property type="entry name" value="YbeY"/>
</dbReference>
<dbReference type="InterPro" id="IPR020549">
    <property type="entry name" value="YbeY_CS"/>
</dbReference>
<dbReference type="NCBIfam" id="TIGR00043">
    <property type="entry name" value="rRNA maturation RNase YbeY"/>
    <property type="match status" value="1"/>
</dbReference>
<dbReference type="PANTHER" id="PTHR46986">
    <property type="entry name" value="ENDORIBONUCLEASE YBEY, CHLOROPLASTIC"/>
    <property type="match status" value="1"/>
</dbReference>
<dbReference type="PANTHER" id="PTHR46986:SF1">
    <property type="entry name" value="ENDORIBONUCLEASE YBEY, CHLOROPLASTIC"/>
    <property type="match status" value="1"/>
</dbReference>
<dbReference type="Pfam" id="PF02130">
    <property type="entry name" value="YbeY"/>
    <property type="match status" value="1"/>
</dbReference>
<dbReference type="SUPFAM" id="SSF55486">
    <property type="entry name" value="Metalloproteases ('zincins'), catalytic domain"/>
    <property type="match status" value="1"/>
</dbReference>
<dbReference type="PROSITE" id="PS01306">
    <property type="entry name" value="UPF0054"/>
    <property type="match status" value="1"/>
</dbReference>
<gene>
    <name evidence="1" type="primary">ybeY</name>
    <name type="ordered locus">ECDH10B_0728</name>
</gene>
<sequence length="155" mass="17526">MSQVILDLQLACEDNSGLPEESQFQTWLNAVIPQFQEESEVTIRVVDTAESHSLNLTYRGKDKPTNVLSFPFEVPPGMEMSLLGDLVICRQVVEKEAQEQGKPLEAHWAHMVVHGSLHLLGYDHIEDDEAEEMEALETEIMLALGYEDPYIAEKE</sequence>
<name>YBEY_ECODH</name>
<proteinExistence type="inferred from homology"/>
<protein>
    <recommendedName>
        <fullName evidence="1">Endoribonuclease YbeY</fullName>
        <ecNumber evidence="1">3.1.-.-</ecNumber>
    </recommendedName>
</protein>
<feature type="chain" id="PRO_1000089173" description="Endoribonuclease YbeY">
    <location>
        <begin position="1"/>
        <end position="155"/>
    </location>
</feature>
<feature type="binding site" evidence="1">
    <location>
        <position position="114"/>
    </location>
    <ligand>
        <name>Zn(2+)</name>
        <dbReference type="ChEBI" id="CHEBI:29105"/>
        <note>catalytic</note>
    </ligand>
</feature>
<feature type="binding site" evidence="1">
    <location>
        <position position="118"/>
    </location>
    <ligand>
        <name>Zn(2+)</name>
        <dbReference type="ChEBI" id="CHEBI:29105"/>
        <note>catalytic</note>
    </ligand>
</feature>
<feature type="binding site" evidence="1">
    <location>
        <position position="124"/>
    </location>
    <ligand>
        <name>Zn(2+)</name>
        <dbReference type="ChEBI" id="CHEBI:29105"/>
        <note>catalytic</note>
    </ligand>
</feature>
<comment type="function">
    <text evidence="1">Single strand-specific metallo-endoribonuclease involved in late-stage 70S ribosome quality control and in maturation of the 3' terminus of the 16S rRNA.</text>
</comment>
<comment type="cofactor">
    <cofactor evidence="1">
        <name>Zn(2+)</name>
        <dbReference type="ChEBI" id="CHEBI:29105"/>
    </cofactor>
    <text evidence="1">Binds 1 zinc ion.</text>
</comment>
<comment type="subcellular location">
    <subcellularLocation>
        <location evidence="1">Cytoplasm</location>
    </subcellularLocation>
</comment>
<comment type="similarity">
    <text evidence="1">Belongs to the endoribonuclease YbeY family.</text>
</comment>
<keyword id="KW-0963">Cytoplasm</keyword>
<keyword id="KW-0255">Endonuclease</keyword>
<keyword id="KW-0378">Hydrolase</keyword>
<keyword id="KW-0479">Metal-binding</keyword>
<keyword id="KW-0540">Nuclease</keyword>
<keyword id="KW-0690">Ribosome biogenesis</keyword>
<keyword id="KW-0698">rRNA processing</keyword>
<keyword id="KW-0862">Zinc</keyword>
<accession>B1X654</accession>
<evidence type="ECO:0000255" key="1">
    <source>
        <dbReference type="HAMAP-Rule" id="MF_00009"/>
    </source>
</evidence>
<reference key="1">
    <citation type="journal article" date="2008" name="J. Bacteriol.">
        <title>The complete genome sequence of Escherichia coli DH10B: insights into the biology of a laboratory workhorse.</title>
        <authorList>
            <person name="Durfee T."/>
            <person name="Nelson R."/>
            <person name="Baldwin S."/>
            <person name="Plunkett G. III"/>
            <person name="Burland V."/>
            <person name="Mau B."/>
            <person name="Petrosino J.F."/>
            <person name="Qin X."/>
            <person name="Muzny D.M."/>
            <person name="Ayele M."/>
            <person name="Gibbs R.A."/>
            <person name="Csorgo B."/>
            <person name="Posfai G."/>
            <person name="Weinstock G.M."/>
            <person name="Blattner F.R."/>
        </authorList>
    </citation>
    <scope>NUCLEOTIDE SEQUENCE [LARGE SCALE GENOMIC DNA]</scope>
    <source>
        <strain>K12 / DH10B</strain>
    </source>
</reference>